<evidence type="ECO:0000255" key="1">
    <source>
        <dbReference type="HAMAP-Rule" id="MF_02114"/>
    </source>
</evidence>
<accession>Q1AXF2</accession>
<protein>
    <recommendedName>
        <fullName evidence="1">Phosphoenolpyruvate guanylyltransferase</fullName>
        <shortName evidence="1">PEP guanylyltransferase</shortName>
        <ecNumber evidence="1">2.7.7.105</ecNumber>
    </recommendedName>
</protein>
<feature type="chain" id="PRO_0000398711" description="Phosphoenolpyruvate guanylyltransferase">
    <location>
        <begin position="1"/>
        <end position="205"/>
    </location>
</feature>
<feature type="binding site" evidence="1">
    <location>
        <position position="137"/>
    </location>
    <ligand>
        <name>phosphoenolpyruvate</name>
        <dbReference type="ChEBI" id="CHEBI:58702"/>
    </ligand>
</feature>
<feature type="binding site" evidence="1">
    <location>
        <position position="153"/>
    </location>
    <ligand>
        <name>phosphoenolpyruvate</name>
        <dbReference type="ChEBI" id="CHEBI:58702"/>
    </ligand>
</feature>
<feature type="binding site" evidence="1">
    <location>
        <position position="156"/>
    </location>
    <ligand>
        <name>phosphoenolpyruvate</name>
        <dbReference type="ChEBI" id="CHEBI:58702"/>
    </ligand>
</feature>
<keyword id="KW-0342">GTP-binding</keyword>
<keyword id="KW-0547">Nucleotide-binding</keyword>
<keyword id="KW-0548">Nucleotidyltransferase</keyword>
<keyword id="KW-1185">Reference proteome</keyword>
<keyword id="KW-0808">Transferase</keyword>
<dbReference type="EC" id="2.7.7.105" evidence="1"/>
<dbReference type="EMBL" id="CP000386">
    <property type="protein sequence ID" value="ABG03926.1"/>
    <property type="molecule type" value="Genomic_DNA"/>
</dbReference>
<dbReference type="RefSeq" id="WP_011563944.1">
    <property type="nucleotide sequence ID" value="NC_008148.1"/>
</dbReference>
<dbReference type="SMR" id="Q1AXF2"/>
<dbReference type="STRING" id="266117.Rxyl_0959"/>
<dbReference type="KEGG" id="rxy:Rxyl_0959"/>
<dbReference type="eggNOG" id="COG1920">
    <property type="taxonomic scope" value="Bacteria"/>
</dbReference>
<dbReference type="HOGENOM" id="CLU_076569_1_0_11"/>
<dbReference type="OrthoDB" id="9151145at2"/>
<dbReference type="UniPathway" id="UPA00071"/>
<dbReference type="Proteomes" id="UP000006637">
    <property type="component" value="Chromosome"/>
</dbReference>
<dbReference type="GO" id="GO:0005525">
    <property type="term" value="F:GTP binding"/>
    <property type="evidence" value="ECO:0007669"/>
    <property type="project" value="UniProtKB-KW"/>
</dbReference>
<dbReference type="GO" id="GO:0043814">
    <property type="term" value="F:phospholactate guanylyltransferase activity"/>
    <property type="evidence" value="ECO:0007669"/>
    <property type="project" value="InterPro"/>
</dbReference>
<dbReference type="GO" id="GO:0052645">
    <property type="term" value="P:F420-0 metabolic process"/>
    <property type="evidence" value="ECO:0007669"/>
    <property type="project" value="UniProtKB-UniRule"/>
</dbReference>
<dbReference type="Gene3D" id="3.90.550.10">
    <property type="entry name" value="Spore Coat Polysaccharide Biosynthesis Protein SpsA, Chain A"/>
    <property type="match status" value="1"/>
</dbReference>
<dbReference type="HAMAP" id="MF_02114">
    <property type="entry name" value="CofC"/>
    <property type="match status" value="1"/>
</dbReference>
<dbReference type="InterPro" id="IPR002835">
    <property type="entry name" value="CofC"/>
</dbReference>
<dbReference type="InterPro" id="IPR029044">
    <property type="entry name" value="Nucleotide-diphossugar_trans"/>
</dbReference>
<dbReference type="NCBIfam" id="TIGR03552">
    <property type="entry name" value="F420_cofC"/>
    <property type="match status" value="1"/>
</dbReference>
<dbReference type="PANTHER" id="PTHR40392">
    <property type="entry name" value="2-PHOSPHO-L-LACTATE GUANYLYLTRANSFERASE"/>
    <property type="match status" value="1"/>
</dbReference>
<dbReference type="PANTHER" id="PTHR40392:SF1">
    <property type="entry name" value="2-PHOSPHO-L-LACTATE GUANYLYLTRANSFERASE"/>
    <property type="match status" value="1"/>
</dbReference>
<dbReference type="Pfam" id="PF01983">
    <property type="entry name" value="CofC"/>
    <property type="match status" value="1"/>
</dbReference>
<dbReference type="SUPFAM" id="SSF53448">
    <property type="entry name" value="Nucleotide-diphospho-sugar transferases"/>
    <property type="match status" value="1"/>
</dbReference>
<proteinExistence type="inferred from homology"/>
<comment type="function">
    <text evidence="1">Guanylyltransferase that catalyzes the activation of phosphoenolpyruvate (PEP) as enolpyruvoyl-2-diphospho-5'-guanosine, via the condensation of PEP with GTP. It is involved in the biosynthesis of coenzyme F420, a hydride carrier cofactor.</text>
</comment>
<comment type="catalytic activity">
    <reaction evidence="1">
        <text>phosphoenolpyruvate + GTP + H(+) = enolpyruvoyl-2-diphospho-5'-guanosine + diphosphate</text>
        <dbReference type="Rhea" id="RHEA:30519"/>
        <dbReference type="ChEBI" id="CHEBI:15378"/>
        <dbReference type="ChEBI" id="CHEBI:33019"/>
        <dbReference type="ChEBI" id="CHEBI:37565"/>
        <dbReference type="ChEBI" id="CHEBI:58702"/>
        <dbReference type="ChEBI" id="CHEBI:143701"/>
        <dbReference type="EC" id="2.7.7.105"/>
    </reaction>
</comment>
<comment type="pathway">
    <text evidence="1">Cofactor biosynthesis; coenzyme F420 biosynthesis.</text>
</comment>
<comment type="similarity">
    <text evidence="1">Belongs to the CofC family.</text>
</comment>
<sequence length="205" mass="21464">MSVFAVVPVKELRGAKSRLGAVLDPVGRAGLTLHMLRRVVPALRGAGLRRVLVVSPDPAVLEEARLLGAAGLRQEGFGLNAALEEGRRRALEEGAGALLALPADLPLIEPADVAALLEVAGEGPCAVISPDDARSGTNALLLRPPGALPFSFGPGSFGVHLQAALRRGVRVRVCERPNVAFDLDSPEDLARLEASGGVQYRPRRA</sequence>
<organism>
    <name type="scientific">Rubrobacter xylanophilus (strain DSM 9941 / JCM 11954 / NBRC 16129 / PRD-1)</name>
    <dbReference type="NCBI Taxonomy" id="266117"/>
    <lineage>
        <taxon>Bacteria</taxon>
        <taxon>Bacillati</taxon>
        <taxon>Actinomycetota</taxon>
        <taxon>Rubrobacteria</taxon>
        <taxon>Rubrobacterales</taxon>
        <taxon>Rubrobacteraceae</taxon>
        <taxon>Rubrobacter</taxon>
    </lineage>
</organism>
<name>FBID_RUBXD</name>
<gene>
    <name evidence="1" type="primary">fbiD</name>
    <name type="ordered locus">Rxyl_0959</name>
</gene>
<reference key="1">
    <citation type="submission" date="2006-06" db="EMBL/GenBank/DDBJ databases">
        <title>Complete sequence of Rubrobacter xylanophilus DSM 9941.</title>
        <authorList>
            <consortium name="US DOE Joint Genome Institute"/>
            <person name="Copeland A."/>
            <person name="Lucas S."/>
            <person name="Lapidus A."/>
            <person name="Barry K."/>
            <person name="Detter J.C."/>
            <person name="Glavina del Rio T."/>
            <person name="Hammon N."/>
            <person name="Israni S."/>
            <person name="Dalin E."/>
            <person name="Tice H."/>
            <person name="Pitluck S."/>
            <person name="Munk A.C."/>
            <person name="Brettin T."/>
            <person name="Bruce D."/>
            <person name="Han C."/>
            <person name="Tapia R."/>
            <person name="Gilna P."/>
            <person name="Schmutz J."/>
            <person name="Larimer F."/>
            <person name="Land M."/>
            <person name="Hauser L."/>
            <person name="Kyrpides N."/>
            <person name="Lykidis A."/>
            <person name="da Costa M.S."/>
            <person name="Rainey F.A."/>
            <person name="Empadinhas N."/>
            <person name="Jolivet E."/>
            <person name="Battista J.R."/>
            <person name="Richardson P."/>
        </authorList>
    </citation>
    <scope>NUCLEOTIDE SEQUENCE [LARGE SCALE GENOMIC DNA]</scope>
    <source>
        <strain>DSM 9941 / JCM 11954 / NBRC 16129 / PRD-1</strain>
    </source>
</reference>